<reference key="1">
    <citation type="journal article" date="2015" name="Genome Announc.">
        <title>Genome sequence of Aspergillus flavus NRRL 3357, a strain that causes aflatoxin contamination of food and feed.</title>
        <authorList>
            <person name="Nierman W.C."/>
            <person name="Yu J."/>
            <person name="Fedorova-Abrams N.D."/>
            <person name="Losada L."/>
            <person name="Cleveland T.E."/>
            <person name="Bhatnagar D."/>
            <person name="Bennett J.W."/>
            <person name="Dean R."/>
            <person name="Payne G.A."/>
        </authorList>
    </citation>
    <scope>NUCLEOTIDE SEQUENCE [LARGE SCALE GENOMIC DNA]</scope>
    <source>
        <strain>ATCC 200026 / FGSC A1120 / IAM 13836 / NRRL 3357 / JCM 12722 / SRRC 167</strain>
    </source>
</reference>
<reference key="2">
    <citation type="journal article" date="2013" name="Angew. Chem. Int. Ed.">
        <title>Homologous NRPS-like gene clusters mediate redundant small-molecule biosynthesis in Aspergillus flavus.</title>
        <authorList>
            <person name="Forseth R.R."/>
            <person name="Amaike S."/>
            <person name="Schwenk D."/>
            <person name="Affeldt K.J."/>
            <person name="Hoffmeister D."/>
            <person name="Schroeder F.C."/>
            <person name="Keller N.P."/>
        </authorList>
    </citation>
    <scope>IDENTIFICATION</scope>
    <scope>FUNCTION</scope>
    <scope>INDUCTION</scope>
    <scope>PATHWAY</scope>
</reference>
<gene>
    <name evidence="3" type="primary">lnaB</name>
    <name type="ORF">AFLA_101710</name>
</gene>
<comment type="function">
    <text evidence="2">NmrA-like family domain-containing oxidoreductase; part of the lna gene cluster that mediates the biosynthesis of diastereomeric piperazines. Lna and lnb clusters encode sets of enzymes that produce overlapping sets of previously undescribed metabolites such as piperazinomycin-like metabolites or morpholine (PubMed:23281040). The lna and lnb biosynthetic pathways appear to be part of a signaling network that controls the formation of sclerotia, a resilient overwintering structure (PubMed:23281040). One primary function of the non-canonical nonribosomal peptide synthetases lnaA and lnbA consists in the reduction of L-tyrosine (PubMed:23281040). The presence in the clusters of tailoring enzymes such as the oxidoreductases lnaB, lnbB, lnaE or lnbE, as well as of the cytochrome P450 monooxygenases lnaC, lnaD, or lnbC, might explain formation of various diastereomeric piperazines (PubMed:23281040).</text>
</comment>
<comment type="pathway">
    <text evidence="5">Secondary metabolite biosynthesis.</text>
</comment>
<comment type="induction">
    <text evidence="2">Expression is regulated by a complex signaling network which may include cross-pathway interactions mediated by sensing of the cluster final products or shared biosynthetic intermediates.</text>
</comment>
<comment type="similarity">
    <text evidence="4">Belongs to the NmrA-type oxidoreductase family.</text>
</comment>
<evidence type="ECO:0000250" key="1">
    <source>
        <dbReference type="UniProtKB" id="Q9HBL8"/>
    </source>
</evidence>
<evidence type="ECO:0000269" key="2">
    <source>
    </source>
</evidence>
<evidence type="ECO:0000303" key="3">
    <source>
    </source>
</evidence>
<evidence type="ECO:0000305" key="4"/>
<evidence type="ECO:0000305" key="5">
    <source>
    </source>
</evidence>
<organism>
    <name type="scientific">Aspergillus flavus (strain ATCC 200026 / FGSC A1120 / IAM 13836 / NRRL 3357 / JCM 12722 / SRRC 167)</name>
    <dbReference type="NCBI Taxonomy" id="332952"/>
    <lineage>
        <taxon>Eukaryota</taxon>
        <taxon>Fungi</taxon>
        <taxon>Dikarya</taxon>
        <taxon>Ascomycota</taxon>
        <taxon>Pezizomycotina</taxon>
        <taxon>Eurotiomycetes</taxon>
        <taxon>Eurotiomycetidae</taxon>
        <taxon>Eurotiales</taxon>
        <taxon>Aspergillaceae</taxon>
        <taxon>Aspergillus</taxon>
        <taxon>Aspergillus subgen. Circumdati</taxon>
    </lineage>
</organism>
<dbReference type="EC" id="1.-.-.-" evidence="5"/>
<dbReference type="EMBL" id="EQ963484">
    <property type="protein sequence ID" value="EED46507.1"/>
    <property type="molecule type" value="Genomic_DNA"/>
</dbReference>
<dbReference type="RefSeq" id="XP_002384043.1">
    <property type="nucleotide sequence ID" value="XM_002384002.1"/>
</dbReference>
<dbReference type="SMR" id="B8NU00"/>
<dbReference type="EnsemblFungi" id="EED46507">
    <property type="protein sequence ID" value="EED46507"/>
    <property type="gene ID" value="AFLA_101710"/>
</dbReference>
<dbReference type="VEuPathDB" id="FungiDB:AFLA_010421"/>
<dbReference type="eggNOG" id="ENOG502SKP9">
    <property type="taxonomic scope" value="Eukaryota"/>
</dbReference>
<dbReference type="HOGENOM" id="CLU_007383_8_5_1"/>
<dbReference type="OMA" id="VRMKAMD"/>
<dbReference type="GO" id="GO:0005634">
    <property type="term" value="C:nucleus"/>
    <property type="evidence" value="ECO:0007669"/>
    <property type="project" value="TreeGrafter"/>
</dbReference>
<dbReference type="GO" id="GO:0016491">
    <property type="term" value="F:oxidoreductase activity"/>
    <property type="evidence" value="ECO:0007669"/>
    <property type="project" value="UniProtKB-KW"/>
</dbReference>
<dbReference type="CDD" id="cd05251">
    <property type="entry name" value="NmrA_like_SDR_a"/>
    <property type="match status" value="1"/>
</dbReference>
<dbReference type="Gene3D" id="3.40.50.720">
    <property type="entry name" value="NAD(P)-binding Rossmann-like Domain"/>
    <property type="match status" value="1"/>
</dbReference>
<dbReference type="Gene3D" id="3.90.25.10">
    <property type="entry name" value="UDP-galactose 4-epimerase, domain 1"/>
    <property type="match status" value="1"/>
</dbReference>
<dbReference type="InterPro" id="IPR036291">
    <property type="entry name" value="NAD(P)-bd_dom_sf"/>
</dbReference>
<dbReference type="InterPro" id="IPR008030">
    <property type="entry name" value="NmrA-like"/>
</dbReference>
<dbReference type="InterPro" id="IPR051164">
    <property type="entry name" value="NmrA-like_oxidored"/>
</dbReference>
<dbReference type="PANTHER" id="PTHR42748">
    <property type="entry name" value="NITROGEN METABOLITE REPRESSION PROTEIN NMRA FAMILY MEMBER"/>
    <property type="match status" value="1"/>
</dbReference>
<dbReference type="PANTHER" id="PTHR42748:SF30">
    <property type="entry name" value="NMRA-LIKE DOMAIN-CONTAINING PROTEIN"/>
    <property type="match status" value="1"/>
</dbReference>
<dbReference type="Pfam" id="PF05368">
    <property type="entry name" value="NmrA"/>
    <property type="match status" value="1"/>
</dbReference>
<dbReference type="SUPFAM" id="SSF51735">
    <property type="entry name" value="NAD(P)-binding Rossmann-fold domains"/>
    <property type="match status" value="1"/>
</dbReference>
<keyword id="KW-0521">NADP</keyword>
<keyword id="KW-0560">Oxidoreductase</keyword>
<proteinExistence type="evidence at transcript level"/>
<name>LNAB_ASPFN</name>
<protein>
    <recommendedName>
        <fullName evidence="3">NmrA-like family domain-containing oxidoreductase lnaB</fullName>
        <ecNumber evidence="5">1.-.-.-</ecNumber>
    </recommendedName>
    <alternativeName>
        <fullName evidence="3">Lna diastereomeric piperazines biosynthesis cluster protein B</fullName>
    </alternativeName>
</protein>
<feature type="chain" id="PRO_0000446076" description="NmrA-like family domain-containing oxidoreductase lnaB">
    <location>
        <begin position="1"/>
        <end position="334"/>
    </location>
</feature>
<feature type="binding site" evidence="1">
    <location>
        <begin position="12"/>
        <end position="17"/>
    </location>
    <ligand>
        <name>NADP(+)</name>
        <dbReference type="ChEBI" id="CHEBI:58349"/>
    </ligand>
</feature>
<feature type="binding site" evidence="1">
    <location>
        <begin position="38"/>
        <end position="42"/>
    </location>
    <ligand>
        <name>NADP(+)</name>
        <dbReference type="ChEBI" id="CHEBI:58349"/>
    </ligand>
</feature>
<feature type="binding site" evidence="1">
    <location>
        <begin position="59"/>
        <end position="60"/>
    </location>
    <ligand>
        <name>NADP(+)</name>
        <dbReference type="ChEBI" id="CHEBI:58349"/>
    </ligand>
</feature>
<feature type="binding site" evidence="1">
    <location>
        <begin position="80"/>
        <end position="82"/>
    </location>
    <ligand>
        <name>NADP(+)</name>
        <dbReference type="ChEBI" id="CHEBI:58349"/>
    </ligand>
</feature>
<feature type="binding site" evidence="1">
    <location>
        <position position="138"/>
    </location>
    <ligand>
        <name>NADP(+)</name>
        <dbReference type="ChEBI" id="CHEBI:58349"/>
    </ligand>
</feature>
<feature type="binding site" evidence="1">
    <location>
        <begin position="162"/>
        <end position="165"/>
    </location>
    <ligand>
        <name>NADP(+)</name>
        <dbReference type="ChEBI" id="CHEBI:58349"/>
    </ligand>
</feature>
<sequence length="334" mass="36713">MSPDRKLITIFGGTGKQGGSVAHSLLQNPDFRVRVITRNAQSDASRKLAALGADIAQGDGFSGDEMLSAFSGSWGAFVNINSDDKIFTTEGGPTEFDMGKIIVDSAVQAGVKHLVFSSGPPCTEMTNGRVRMKAMDMKNKIEQYARSLGSFETFTPIGAGWFLENFLGKEVAPVFGGFPYFPDDQGYLTFRVPYWGGDEHVPWLSISDDFGDIVQGIFLDPGRWNGHFVHGVSDIRSFEQVVADFAAVTGNKARFQPILPTWEAFDTHGIQELEDVKLMFGFTQLTGGRYFGPEDTEVDTARQLKQITGLKLGRPEGQHKLTSARDWFAARFAN</sequence>
<accession>B8NU00</accession>